<evidence type="ECO:0000255" key="1">
    <source>
        <dbReference type="HAMAP-Rule" id="MF_00394"/>
    </source>
</evidence>
<proteinExistence type="inferred from homology"/>
<feature type="chain" id="PRO_0000137932" description="Glycerol-3-phosphate dehydrogenase [NAD(P)+]">
    <location>
        <begin position="1"/>
        <end position="351"/>
    </location>
</feature>
<feature type="active site" description="Proton acceptor" evidence="1">
    <location>
        <position position="208"/>
    </location>
</feature>
<feature type="binding site" evidence="1">
    <location>
        <position position="18"/>
    </location>
    <ligand>
        <name>NADPH</name>
        <dbReference type="ChEBI" id="CHEBI:57783"/>
    </ligand>
</feature>
<feature type="binding site" evidence="1">
    <location>
        <position position="19"/>
    </location>
    <ligand>
        <name>NADPH</name>
        <dbReference type="ChEBI" id="CHEBI:57783"/>
    </ligand>
</feature>
<feature type="binding site" evidence="1">
    <location>
        <position position="38"/>
    </location>
    <ligand>
        <name>NADPH</name>
        <dbReference type="ChEBI" id="CHEBI:57783"/>
    </ligand>
</feature>
<feature type="binding site" evidence="1">
    <location>
        <position position="122"/>
    </location>
    <ligand>
        <name>NADPH</name>
        <dbReference type="ChEBI" id="CHEBI:57783"/>
    </ligand>
</feature>
<feature type="binding site" evidence="1">
    <location>
        <position position="122"/>
    </location>
    <ligand>
        <name>sn-glycerol 3-phosphate</name>
        <dbReference type="ChEBI" id="CHEBI:57597"/>
    </ligand>
</feature>
<feature type="binding site" evidence="1">
    <location>
        <position position="153"/>
    </location>
    <ligand>
        <name>sn-glycerol 3-phosphate</name>
        <dbReference type="ChEBI" id="CHEBI:57597"/>
    </ligand>
</feature>
<feature type="binding site" evidence="1">
    <location>
        <position position="155"/>
    </location>
    <ligand>
        <name>sn-glycerol 3-phosphate</name>
        <dbReference type="ChEBI" id="CHEBI:57597"/>
    </ligand>
</feature>
<feature type="binding site" evidence="1">
    <location>
        <position position="157"/>
    </location>
    <ligand>
        <name>NADPH</name>
        <dbReference type="ChEBI" id="CHEBI:57783"/>
    </ligand>
</feature>
<feature type="binding site" evidence="1">
    <location>
        <position position="208"/>
    </location>
    <ligand>
        <name>sn-glycerol 3-phosphate</name>
        <dbReference type="ChEBI" id="CHEBI:57597"/>
    </ligand>
</feature>
<feature type="binding site" evidence="1">
    <location>
        <position position="261"/>
    </location>
    <ligand>
        <name>sn-glycerol 3-phosphate</name>
        <dbReference type="ChEBI" id="CHEBI:57597"/>
    </ligand>
</feature>
<feature type="binding site" evidence="1">
    <location>
        <position position="271"/>
    </location>
    <ligand>
        <name>sn-glycerol 3-phosphate</name>
        <dbReference type="ChEBI" id="CHEBI:57597"/>
    </ligand>
</feature>
<feature type="binding site" evidence="1">
    <location>
        <position position="272"/>
    </location>
    <ligand>
        <name>NADPH</name>
        <dbReference type="ChEBI" id="CHEBI:57783"/>
    </ligand>
</feature>
<feature type="binding site" evidence="1">
    <location>
        <position position="272"/>
    </location>
    <ligand>
        <name>sn-glycerol 3-phosphate</name>
        <dbReference type="ChEBI" id="CHEBI:57597"/>
    </ligand>
</feature>
<feature type="binding site" evidence="1">
    <location>
        <position position="273"/>
    </location>
    <ligand>
        <name>sn-glycerol 3-phosphate</name>
        <dbReference type="ChEBI" id="CHEBI:57597"/>
    </ligand>
</feature>
<feature type="binding site" evidence="1">
    <location>
        <position position="297"/>
    </location>
    <ligand>
        <name>NADPH</name>
        <dbReference type="ChEBI" id="CHEBI:57783"/>
    </ligand>
</feature>
<keyword id="KW-0963">Cytoplasm</keyword>
<keyword id="KW-0444">Lipid biosynthesis</keyword>
<keyword id="KW-0443">Lipid metabolism</keyword>
<keyword id="KW-0520">NAD</keyword>
<keyword id="KW-0521">NADP</keyword>
<keyword id="KW-0547">Nucleotide-binding</keyword>
<keyword id="KW-0560">Oxidoreductase</keyword>
<keyword id="KW-0594">Phospholipid biosynthesis</keyword>
<keyword id="KW-1208">Phospholipid metabolism</keyword>
<keyword id="KW-1185">Reference proteome</keyword>
<comment type="function">
    <text evidence="1">Catalyzes the reduction of the glycolytic intermediate dihydroxyacetone phosphate (DHAP) to sn-glycerol 3-phosphate (G3P), the key precursor for phospholipid synthesis.</text>
</comment>
<comment type="catalytic activity">
    <reaction evidence="1">
        <text>sn-glycerol 3-phosphate + NAD(+) = dihydroxyacetone phosphate + NADH + H(+)</text>
        <dbReference type="Rhea" id="RHEA:11092"/>
        <dbReference type="ChEBI" id="CHEBI:15378"/>
        <dbReference type="ChEBI" id="CHEBI:57540"/>
        <dbReference type="ChEBI" id="CHEBI:57597"/>
        <dbReference type="ChEBI" id="CHEBI:57642"/>
        <dbReference type="ChEBI" id="CHEBI:57945"/>
        <dbReference type="EC" id="1.1.1.94"/>
    </reaction>
    <physiologicalReaction direction="right-to-left" evidence="1">
        <dbReference type="Rhea" id="RHEA:11094"/>
    </physiologicalReaction>
</comment>
<comment type="catalytic activity">
    <reaction evidence="1">
        <text>sn-glycerol 3-phosphate + NADP(+) = dihydroxyacetone phosphate + NADPH + H(+)</text>
        <dbReference type="Rhea" id="RHEA:11096"/>
        <dbReference type="ChEBI" id="CHEBI:15378"/>
        <dbReference type="ChEBI" id="CHEBI:57597"/>
        <dbReference type="ChEBI" id="CHEBI:57642"/>
        <dbReference type="ChEBI" id="CHEBI:57783"/>
        <dbReference type="ChEBI" id="CHEBI:58349"/>
        <dbReference type="EC" id="1.1.1.94"/>
    </reaction>
    <physiologicalReaction direction="right-to-left" evidence="1">
        <dbReference type="Rhea" id="RHEA:11098"/>
    </physiologicalReaction>
</comment>
<comment type="pathway">
    <text evidence="1">Membrane lipid metabolism; glycerophospholipid metabolism.</text>
</comment>
<comment type="subcellular location">
    <subcellularLocation>
        <location evidence="1">Cytoplasm</location>
    </subcellularLocation>
</comment>
<comment type="similarity">
    <text evidence="1">Belongs to the NAD-dependent glycerol-3-phosphate dehydrogenase family.</text>
</comment>
<organism>
    <name type="scientific">Bordetella pertussis (strain Tohama I / ATCC BAA-589 / NCTC 13251)</name>
    <dbReference type="NCBI Taxonomy" id="257313"/>
    <lineage>
        <taxon>Bacteria</taxon>
        <taxon>Pseudomonadati</taxon>
        <taxon>Pseudomonadota</taxon>
        <taxon>Betaproteobacteria</taxon>
        <taxon>Burkholderiales</taxon>
        <taxon>Alcaligenaceae</taxon>
        <taxon>Bordetella</taxon>
    </lineage>
</organism>
<name>GPDA_BORPE</name>
<sequence>MSQARPATLRVAVLGAGSWGTALAAAASRRHPTVLWARDGAQAQAMAARHENTRYLPGVALPHALQVSADLAQALAHLAHDPAHALIILGVPVAGMTPLCTELAARLPALGLQAVPLVWTCKGFEEQTARLPHETVQAALGAMPGLAAGVLSGPSFAREVAQGLPVALTVASGSSAVRDAVTTALHGAAVRIYASTDVVGVEVGGALKNVIAVACGICDGLALGTNARAALITRGLAEMARFGAALGAQQETFAGLTGLGDLVLTATGELSRNRRVGLEIGAGRKLADILASGMTAEGVRCARAARDRARALNIELPITEAVCAVLFEGLSPMTAVSALLAREARPESPTP</sequence>
<accession>Q7VS47</accession>
<gene>
    <name evidence="1" type="primary">gpsA</name>
    <name type="ordered locus">BP0603</name>
</gene>
<protein>
    <recommendedName>
        <fullName evidence="1">Glycerol-3-phosphate dehydrogenase [NAD(P)+]</fullName>
        <ecNumber evidence="1">1.1.1.94</ecNumber>
    </recommendedName>
    <alternativeName>
        <fullName evidence="1">NAD(P)(+)-dependent glycerol-3-phosphate dehydrogenase</fullName>
    </alternativeName>
    <alternativeName>
        <fullName evidence="1">NAD(P)H-dependent dihydroxyacetone-phosphate reductase</fullName>
    </alternativeName>
</protein>
<dbReference type="EC" id="1.1.1.94" evidence="1"/>
<dbReference type="EMBL" id="BX640412">
    <property type="protein sequence ID" value="CAE44929.1"/>
    <property type="molecule type" value="Genomic_DNA"/>
</dbReference>
<dbReference type="RefSeq" id="NP_879446.1">
    <property type="nucleotide sequence ID" value="NC_002929.2"/>
</dbReference>
<dbReference type="RefSeq" id="WP_010929907.1">
    <property type="nucleotide sequence ID" value="NZ_CP039022.1"/>
</dbReference>
<dbReference type="SMR" id="Q7VS47"/>
<dbReference type="STRING" id="257313.BP0603"/>
<dbReference type="PaxDb" id="257313-BP0603"/>
<dbReference type="KEGG" id="bpe:BP0603"/>
<dbReference type="PATRIC" id="fig|257313.5.peg.644"/>
<dbReference type="eggNOG" id="COG0240">
    <property type="taxonomic scope" value="Bacteria"/>
</dbReference>
<dbReference type="HOGENOM" id="CLU_033449_0_2_4"/>
<dbReference type="UniPathway" id="UPA00940"/>
<dbReference type="Proteomes" id="UP000002676">
    <property type="component" value="Chromosome"/>
</dbReference>
<dbReference type="GO" id="GO:0005829">
    <property type="term" value="C:cytosol"/>
    <property type="evidence" value="ECO:0007669"/>
    <property type="project" value="TreeGrafter"/>
</dbReference>
<dbReference type="GO" id="GO:0047952">
    <property type="term" value="F:glycerol-3-phosphate dehydrogenase [NAD(P)+] activity"/>
    <property type="evidence" value="ECO:0007669"/>
    <property type="project" value="UniProtKB-UniRule"/>
</dbReference>
<dbReference type="GO" id="GO:0051287">
    <property type="term" value="F:NAD binding"/>
    <property type="evidence" value="ECO:0007669"/>
    <property type="project" value="InterPro"/>
</dbReference>
<dbReference type="GO" id="GO:0005975">
    <property type="term" value="P:carbohydrate metabolic process"/>
    <property type="evidence" value="ECO:0007669"/>
    <property type="project" value="InterPro"/>
</dbReference>
<dbReference type="GO" id="GO:0046167">
    <property type="term" value="P:glycerol-3-phosphate biosynthetic process"/>
    <property type="evidence" value="ECO:0007669"/>
    <property type="project" value="UniProtKB-UniRule"/>
</dbReference>
<dbReference type="GO" id="GO:0046168">
    <property type="term" value="P:glycerol-3-phosphate catabolic process"/>
    <property type="evidence" value="ECO:0007669"/>
    <property type="project" value="InterPro"/>
</dbReference>
<dbReference type="GO" id="GO:0006650">
    <property type="term" value="P:glycerophospholipid metabolic process"/>
    <property type="evidence" value="ECO:0007669"/>
    <property type="project" value="UniProtKB-UniRule"/>
</dbReference>
<dbReference type="GO" id="GO:0008654">
    <property type="term" value="P:phospholipid biosynthetic process"/>
    <property type="evidence" value="ECO:0007669"/>
    <property type="project" value="UniProtKB-KW"/>
</dbReference>
<dbReference type="FunFam" id="1.10.1040.10:FF:000001">
    <property type="entry name" value="Glycerol-3-phosphate dehydrogenase [NAD(P)+]"/>
    <property type="match status" value="1"/>
</dbReference>
<dbReference type="FunFam" id="3.40.50.720:FF:000019">
    <property type="entry name" value="Glycerol-3-phosphate dehydrogenase [NAD(P)+]"/>
    <property type="match status" value="1"/>
</dbReference>
<dbReference type="Gene3D" id="1.10.1040.10">
    <property type="entry name" value="N-(1-d-carboxylethyl)-l-norvaline Dehydrogenase, domain 2"/>
    <property type="match status" value="1"/>
</dbReference>
<dbReference type="Gene3D" id="3.40.50.720">
    <property type="entry name" value="NAD(P)-binding Rossmann-like Domain"/>
    <property type="match status" value="1"/>
</dbReference>
<dbReference type="HAMAP" id="MF_00394">
    <property type="entry name" value="NAD_Glyc3P_dehydrog"/>
    <property type="match status" value="1"/>
</dbReference>
<dbReference type="InterPro" id="IPR008927">
    <property type="entry name" value="6-PGluconate_DH-like_C_sf"/>
</dbReference>
<dbReference type="InterPro" id="IPR013328">
    <property type="entry name" value="6PGD_dom2"/>
</dbReference>
<dbReference type="InterPro" id="IPR006168">
    <property type="entry name" value="G3P_DH_NAD-dep"/>
</dbReference>
<dbReference type="InterPro" id="IPR006109">
    <property type="entry name" value="G3P_DH_NAD-dep_C"/>
</dbReference>
<dbReference type="InterPro" id="IPR011128">
    <property type="entry name" value="G3P_DH_NAD-dep_N"/>
</dbReference>
<dbReference type="InterPro" id="IPR036291">
    <property type="entry name" value="NAD(P)-bd_dom_sf"/>
</dbReference>
<dbReference type="NCBIfam" id="NF000940">
    <property type="entry name" value="PRK00094.1-2"/>
    <property type="match status" value="1"/>
</dbReference>
<dbReference type="NCBIfam" id="NF000942">
    <property type="entry name" value="PRK00094.1-4"/>
    <property type="match status" value="1"/>
</dbReference>
<dbReference type="PANTHER" id="PTHR11728">
    <property type="entry name" value="GLYCEROL-3-PHOSPHATE DEHYDROGENASE"/>
    <property type="match status" value="1"/>
</dbReference>
<dbReference type="PANTHER" id="PTHR11728:SF1">
    <property type="entry name" value="GLYCEROL-3-PHOSPHATE DEHYDROGENASE [NAD(+)] 2, CHLOROPLASTIC"/>
    <property type="match status" value="1"/>
</dbReference>
<dbReference type="Pfam" id="PF07479">
    <property type="entry name" value="NAD_Gly3P_dh_C"/>
    <property type="match status" value="1"/>
</dbReference>
<dbReference type="Pfam" id="PF01210">
    <property type="entry name" value="NAD_Gly3P_dh_N"/>
    <property type="match status" value="1"/>
</dbReference>
<dbReference type="PIRSF" id="PIRSF000114">
    <property type="entry name" value="Glycerol-3-P_dh"/>
    <property type="match status" value="1"/>
</dbReference>
<dbReference type="PRINTS" id="PR00077">
    <property type="entry name" value="GPDHDRGNASE"/>
</dbReference>
<dbReference type="SUPFAM" id="SSF48179">
    <property type="entry name" value="6-phosphogluconate dehydrogenase C-terminal domain-like"/>
    <property type="match status" value="1"/>
</dbReference>
<dbReference type="SUPFAM" id="SSF51735">
    <property type="entry name" value="NAD(P)-binding Rossmann-fold domains"/>
    <property type="match status" value="1"/>
</dbReference>
<dbReference type="PROSITE" id="PS00957">
    <property type="entry name" value="NAD_G3PDH"/>
    <property type="match status" value="1"/>
</dbReference>
<reference key="1">
    <citation type="journal article" date="2003" name="Nat. Genet.">
        <title>Comparative analysis of the genome sequences of Bordetella pertussis, Bordetella parapertussis and Bordetella bronchiseptica.</title>
        <authorList>
            <person name="Parkhill J."/>
            <person name="Sebaihia M."/>
            <person name="Preston A."/>
            <person name="Murphy L.D."/>
            <person name="Thomson N.R."/>
            <person name="Harris D.E."/>
            <person name="Holden M.T.G."/>
            <person name="Churcher C.M."/>
            <person name="Bentley S.D."/>
            <person name="Mungall K.L."/>
            <person name="Cerdeno-Tarraga A.-M."/>
            <person name="Temple L."/>
            <person name="James K.D."/>
            <person name="Harris B."/>
            <person name="Quail M.A."/>
            <person name="Achtman M."/>
            <person name="Atkin R."/>
            <person name="Baker S."/>
            <person name="Basham D."/>
            <person name="Bason N."/>
            <person name="Cherevach I."/>
            <person name="Chillingworth T."/>
            <person name="Collins M."/>
            <person name="Cronin A."/>
            <person name="Davis P."/>
            <person name="Doggett J."/>
            <person name="Feltwell T."/>
            <person name="Goble A."/>
            <person name="Hamlin N."/>
            <person name="Hauser H."/>
            <person name="Holroyd S."/>
            <person name="Jagels K."/>
            <person name="Leather S."/>
            <person name="Moule S."/>
            <person name="Norberczak H."/>
            <person name="O'Neil S."/>
            <person name="Ormond D."/>
            <person name="Price C."/>
            <person name="Rabbinowitsch E."/>
            <person name="Rutter S."/>
            <person name="Sanders M."/>
            <person name="Saunders D."/>
            <person name="Seeger K."/>
            <person name="Sharp S."/>
            <person name="Simmonds M."/>
            <person name="Skelton J."/>
            <person name="Squares R."/>
            <person name="Squares S."/>
            <person name="Stevens K."/>
            <person name="Unwin L."/>
            <person name="Whitehead S."/>
            <person name="Barrell B.G."/>
            <person name="Maskell D.J."/>
        </authorList>
    </citation>
    <scope>NUCLEOTIDE SEQUENCE [LARGE SCALE GENOMIC DNA]</scope>
    <source>
        <strain>Tohama I / ATCC BAA-589 / NCTC 13251</strain>
    </source>
</reference>